<name>HUTH_LEGPL</name>
<accession>Q5WWW8</accession>
<feature type="chain" id="PRO_0000161012" description="Histidine ammonia-lyase">
    <location>
        <begin position="1"/>
        <end position="506"/>
    </location>
</feature>
<feature type="modified residue" description="2,3-didehydroalanine (Ser)" evidence="1">
    <location>
        <position position="145"/>
    </location>
</feature>
<feature type="cross-link" description="5-imidazolinone (Ala-Gly)" evidence="1">
    <location>
        <begin position="144"/>
        <end position="146"/>
    </location>
</feature>
<evidence type="ECO:0000255" key="1">
    <source>
        <dbReference type="HAMAP-Rule" id="MF_00229"/>
    </source>
</evidence>
<dbReference type="EC" id="4.3.1.3" evidence="1"/>
<dbReference type="EMBL" id="CR628337">
    <property type="protein sequence ID" value="CAH15571.1"/>
    <property type="molecule type" value="Genomic_DNA"/>
</dbReference>
<dbReference type="RefSeq" id="WP_011215400.1">
    <property type="nucleotide sequence ID" value="NC_006369.1"/>
</dbReference>
<dbReference type="SMR" id="Q5WWW8"/>
<dbReference type="KEGG" id="lpf:lpl1331"/>
<dbReference type="LegioList" id="lpl1331"/>
<dbReference type="HOGENOM" id="CLU_014801_4_0_6"/>
<dbReference type="UniPathway" id="UPA00379">
    <property type="reaction ID" value="UER00549"/>
</dbReference>
<dbReference type="Proteomes" id="UP000002517">
    <property type="component" value="Chromosome"/>
</dbReference>
<dbReference type="GO" id="GO:0005737">
    <property type="term" value="C:cytoplasm"/>
    <property type="evidence" value="ECO:0007669"/>
    <property type="project" value="UniProtKB-SubCell"/>
</dbReference>
<dbReference type="GO" id="GO:0004397">
    <property type="term" value="F:histidine ammonia-lyase activity"/>
    <property type="evidence" value="ECO:0007669"/>
    <property type="project" value="UniProtKB-UniRule"/>
</dbReference>
<dbReference type="GO" id="GO:0019556">
    <property type="term" value="P:L-histidine catabolic process to glutamate and formamide"/>
    <property type="evidence" value="ECO:0007669"/>
    <property type="project" value="UniProtKB-UniPathway"/>
</dbReference>
<dbReference type="GO" id="GO:0019557">
    <property type="term" value="P:L-histidine catabolic process to glutamate and formate"/>
    <property type="evidence" value="ECO:0007669"/>
    <property type="project" value="UniProtKB-UniPathway"/>
</dbReference>
<dbReference type="CDD" id="cd00332">
    <property type="entry name" value="PAL-HAL"/>
    <property type="match status" value="1"/>
</dbReference>
<dbReference type="FunFam" id="1.10.275.10:FF:000005">
    <property type="entry name" value="Histidine ammonia-lyase"/>
    <property type="match status" value="1"/>
</dbReference>
<dbReference type="FunFam" id="1.20.200.10:FF:000003">
    <property type="entry name" value="Histidine ammonia-lyase"/>
    <property type="match status" value="1"/>
</dbReference>
<dbReference type="Gene3D" id="1.20.200.10">
    <property type="entry name" value="Fumarase/aspartase (Central domain)"/>
    <property type="match status" value="1"/>
</dbReference>
<dbReference type="Gene3D" id="1.10.275.10">
    <property type="entry name" value="Fumarase/aspartase (N-terminal domain)"/>
    <property type="match status" value="1"/>
</dbReference>
<dbReference type="HAMAP" id="MF_00229">
    <property type="entry name" value="His_ammonia_lyase"/>
    <property type="match status" value="1"/>
</dbReference>
<dbReference type="InterPro" id="IPR001106">
    <property type="entry name" value="Aromatic_Lyase"/>
</dbReference>
<dbReference type="InterPro" id="IPR024083">
    <property type="entry name" value="Fumarase/histidase_N"/>
</dbReference>
<dbReference type="InterPro" id="IPR005921">
    <property type="entry name" value="HutH"/>
</dbReference>
<dbReference type="InterPro" id="IPR008948">
    <property type="entry name" value="L-Aspartase-like"/>
</dbReference>
<dbReference type="InterPro" id="IPR022313">
    <property type="entry name" value="Phe/His_NH3-lyase_AS"/>
</dbReference>
<dbReference type="NCBIfam" id="TIGR01225">
    <property type="entry name" value="hutH"/>
    <property type="match status" value="1"/>
</dbReference>
<dbReference type="NCBIfam" id="NF006871">
    <property type="entry name" value="PRK09367.1"/>
    <property type="match status" value="1"/>
</dbReference>
<dbReference type="PANTHER" id="PTHR10362">
    <property type="entry name" value="HISTIDINE AMMONIA-LYASE"/>
    <property type="match status" value="1"/>
</dbReference>
<dbReference type="Pfam" id="PF00221">
    <property type="entry name" value="Lyase_aromatic"/>
    <property type="match status" value="1"/>
</dbReference>
<dbReference type="SUPFAM" id="SSF48557">
    <property type="entry name" value="L-aspartase-like"/>
    <property type="match status" value="1"/>
</dbReference>
<dbReference type="PROSITE" id="PS00488">
    <property type="entry name" value="PAL_HISTIDASE"/>
    <property type="match status" value="1"/>
</dbReference>
<organism>
    <name type="scientific">Legionella pneumophila (strain Lens)</name>
    <dbReference type="NCBI Taxonomy" id="297245"/>
    <lineage>
        <taxon>Bacteria</taxon>
        <taxon>Pseudomonadati</taxon>
        <taxon>Pseudomonadota</taxon>
        <taxon>Gammaproteobacteria</taxon>
        <taxon>Legionellales</taxon>
        <taxon>Legionellaceae</taxon>
        <taxon>Legionella</taxon>
    </lineage>
</organism>
<reference key="1">
    <citation type="journal article" date="2004" name="Nat. Genet.">
        <title>Evidence in the Legionella pneumophila genome for exploitation of host cell functions and high genome plasticity.</title>
        <authorList>
            <person name="Cazalet C."/>
            <person name="Rusniok C."/>
            <person name="Brueggemann H."/>
            <person name="Zidane N."/>
            <person name="Magnier A."/>
            <person name="Ma L."/>
            <person name="Tichit M."/>
            <person name="Jarraud S."/>
            <person name="Bouchier C."/>
            <person name="Vandenesch F."/>
            <person name="Kunst F."/>
            <person name="Etienne J."/>
            <person name="Glaser P."/>
            <person name="Buchrieser C."/>
        </authorList>
    </citation>
    <scope>NUCLEOTIDE SEQUENCE [LARGE SCALE GENOMIC DNA]</scope>
    <source>
        <strain>Lens</strain>
    </source>
</reference>
<comment type="catalytic activity">
    <reaction evidence="1">
        <text>L-histidine = trans-urocanate + NH4(+)</text>
        <dbReference type="Rhea" id="RHEA:21232"/>
        <dbReference type="ChEBI" id="CHEBI:17771"/>
        <dbReference type="ChEBI" id="CHEBI:28938"/>
        <dbReference type="ChEBI" id="CHEBI:57595"/>
        <dbReference type="EC" id="4.3.1.3"/>
    </reaction>
</comment>
<comment type="pathway">
    <text evidence="1">Amino-acid degradation; L-histidine degradation into L-glutamate; N-formimidoyl-L-glutamate from L-histidine: step 1/3.</text>
</comment>
<comment type="subcellular location">
    <subcellularLocation>
        <location evidence="1">Cytoplasm</location>
    </subcellularLocation>
</comment>
<comment type="PTM">
    <text evidence="1">Contains an active site 4-methylidene-imidazol-5-one (MIO), which is formed autocatalytically by cyclization and dehydration of residues Ala-Ser-Gly.</text>
</comment>
<comment type="similarity">
    <text evidence="1">Belongs to the PAL/histidase family.</text>
</comment>
<sequence length="506" mass="54587">MSEHFILQPGQLSLLSIKQILDEGQSCVLAESAFELINASHQTVRKVIDEKKTVYGINTGFGSLANQTISADCLKELQRNIVLSHACGTGKLLPDDVVALILLLKINNLSQGYSGVRLELINALIALFNHKVYPCIPSKGSVGASGDLVPLAHLSLPLLGEGEVRHQGQLISAEEGLKLAGLKPLELEAKEGLALLNGLQVSTALALSALFISETLFETAIISGSLSVDAASGSDVPFDDRIHQTRGHQAQISAASMYRNLLAGSQIRESHRHCNRVQDPYSLRCQPQIMGAVLHQMQFVGQTLQVEANAISDNPLVFAEQGDILSGGNFHGEIIAMAADNLALALSEIGGSAERRIALLIDKNFSGLPAFLVRESGLNSGFMIAHVTAASCASDNKALAHPHSVDSLPTSANQEDHVSMATSAARRLHEMIDNTSTILAIELLAACQGLEFHKPLKTSPQLDKIYQSVRSVVKEYDKDRYFAPDIEKIKKKILDKEFSLLTLTNE</sequence>
<protein>
    <recommendedName>
        <fullName evidence="1">Histidine ammonia-lyase</fullName>
        <shortName evidence="1">Histidase</shortName>
        <ecNumber evidence="1">4.3.1.3</ecNumber>
    </recommendedName>
</protein>
<keyword id="KW-0963">Cytoplasm</keyword>
<keyword id="KW-0369">Histidine metabolism</keyword>
<keyword id="KW-0456">Lyase</keyword>
<proteinExistence type="inferred from homology"/>
<gene>
    <name evidence="1" type="primary">hutH</name>
    <name type="ordered locus">lpl1331</name>
</gene>